<organism>
    <name type="scientific">Homo sapiens</name>
    <name type="common">Human</name>
    <dbReference type="NCBI Taxonomy" id="9606"/>
    <lineage>
        <taxon>Eukaryota</taxon>
        <taxon>Metazoa</taxon>
        <taxon>Chordata</taxon>
        <taxon>Craniata</taxon>
        <taxon>Vertebrata</taxon>
        <taxon>Euteleostomi</taxon>
        <taxon>Mammalia</taxon>
        <taxon>Eutheria</taxon>
        <taxon>Euarchontoglires</taxon>
        <taxon>Primates</taxon>
        <taxon>Haplorrhini</taxon>
        <taxon>Catarrhini</taxon>
        <taxon>Hominidae</taxon>
        <taxon>Homo</taxon>
    </lineage>
</organism>
<reference key="1">
    <citation type="submission" date="2001-12" db="EMBL/GenBank/DDBJ databases">
        <authorList>
            <person name="Guo J.H."/>
            <person name="Yu L."/>
        </authorList>
    </citation>
    <scope>NUCLEOTIDE SEQUENCE [LARGE SCALE MRNA]</scope>
    <source>
        <tissue>Brain</tissue>
    </source>
</reference>
<reference key="2">
    <citation type="journal article" date="2006" name="Nature">
        <title>The DNA sequence and biological annotation of human chromosome 1.</title>
        <authorList>
            <person name="Gregory S.G."/>
            <person name="Barlow K.F."/>
            <person name="McLay K.E."/>
            <person name="Kaul R."/>
            <person name="Swarbreck D."/>
            <person name="Dunham A."/>
            <person name="Scott C.E."/>
            <person name="Howe K.L."/>
            <person name="Woodfine K."/>
            <person name="Spencer C.C.A."/>
            <person name="Jones M.C."/>
            <person name="Gillson C."/>
            <person name="Searle S."/>
            <person name="Zhou Y."/>
            <person name="Kokocinski F."/>
            <person name="McDonald L."/>
            <person name="Evans R."/>
            <person name="Phillips K."/>
            <person name="Atkinson A."/>
            <person name="Cooper R."/>
            <person name="Jones C."/>
            <person name="Hall R.E."/>
            <person name="Andrews T.D."/>
            <person name="Lloyd C."/>
            <person name="Ainscough R."/>
            <person name="Almeida J.P."/>
            <person name="Ambrose K.D."/>
            <person name="Anderson F."/>
            <person name="Andrew R.W."/>
            <person name="Ashwell R.I.S."/>
            <person name="Aubin K."/>
            <person name="Babbage A.K."/>
            <person name="Bagguley C.L."/>
            <person name="Bailey J."/>
            <person name="Beasley H."/>
            <person name="Bethel G."/>
            <person name="Bird C.P."/>
            <person name="Bray-Allen S."/>
            <person name="Brown J.Y."/>
            <person name="Brown A.J."/>
            <person name="Buckley D."/>
            <person name="Burton J."/>
            <person name="Bye J."/>
            <person name="Carder C."/>
            <person name="Chapman J.C."/>
            <person name="Clark S.Y."/>
            <person name="Clarke G."/>
            <person name="Clee C."/>
            <person name="Cobley V."/>
            <person name="Collier R.E."/>
            <person name="Corby N."/>
            <person name="Coville G.J."/>
            <person name="Davies J."/>
            <person name="Deadman R."/>
            <person name="Dunn M."/>
            <person name="Earthrowl M."/>
            <person name="Ellington A.G."/>
            <person name="Errington H."/>
            <person name="Frankish A."/>
            <person name="Frankland J."/>
            <person name="French L."/>
            <person name="Garner P."/>
            <person name="Garnett J."/>
            <person name="Gay L."/>
            <person name="Ghori M.R.J."/>
            <person name="Gibson R."/>
            <person name="Gilby L.M."/>
            <person name="Gillett W."/>
            <person name="Glithero R.J."/>
            <person name="Grafham D.V."/>
            <person name="Griffiths C."/>
            <person name="Griffiths-Jones S."/>
            <person name="Grocock R."/>
            <person name="Hammond S."/>
            <person name="Harrison E.S.I."/>
            <person name="Hart E."/>
            <person name="Haugen E."/>
            <person name="Heath P.D."/>
            <person name="Holmes S."/>
            <person name="Holt K."/>
            <person name="Howden P.J."/>
            <person name="Hunt A.R."/>
            <person name="Hunt S.E."/>
            <person name="Hunter G."/>
            <person name="Isherwood J."/>
            <person name="James R."/>
            <person name="Johnson C."/>
            <person name="Johnson D."/>
            <person name="Joy A."/>
            <person name="Kay M."/>
            <person name="Kershaw J.K."/>
            <person name="Kibukawa M."/>
            <person name="Kimberley A.M."/>
            <person name="King A."/>
            <person name="Knights A.J."/>
            <person name="Lad H."/>
            <person name="Laird G."/>
            <person name="Lawlor S."/>
            <person name="Leongamornlert D.A."/>
            <person name="Lloyd D.M."/>
            <person name="Loveland J."/>
            <person name="Lovell J."/>
            <person name="Lush M.J."/>
            <person name="Lyne R."/>
            <person name="Martin S."/>
            <person name="Mashreghi-Mohammadi M."/>
            <person name="Matthews L."/>
            <person name="Matthews N.S.W."/>
            <person name="McLaren S."/>
            <person name="Milne S."/>
            <person name="Mistry S."/>
            <person name="Moore M.J.F."/>
            <person name="Nickerson T."/>
            <person name="O'Dell C.N."/>
            <person name="Oliver K."/>
            <person name="Palmeiri A."/>
            <person name="Palmer S.A."/>
            <person name="Parker A."/>
            <person name="Patel D."/>
            <person name="Pearce A.V."/>
            <person name="Peck A.I."/>
            <person name="Pelan S."/>
            <person name="Phelps K."/>
            <person name="Phillimore B.J."/>
            <person name="Plumb R."/>
            <person name="Rajan J."/>
            <person name="Raymond C."/>
            <person name="Rouse G."/>
            <person name="Saenphimmachak C."/>
            <person name="Sehra H.K."/>
            <person name="Sheridan E."/>
            <person name="Shownkeen R."/>
            <person name="Sims S."/>
            <person name="Skuce C.D."/>
            <person name="Smith M."/>
            <person name="Steward C."/>
            <person name="Subramanian S."/>
            <person name="Sycamore N."/>
            <person name="Tracey A."/>
            <person name="Tromans A."/>
            <person name="Van Helmond Z."/>
            <person name="Wall M."/>
            <person name="Wallis J.M."/>
            <person name="White S."/>
            <person name="Whitehead S.L."/>
            <person name="Wilkinson J.E."/>
            <person name="Willey D.L."/>
            <person name="Williams H."/>
            <person name="Wilming L."/>
            <person name="Wray P.W."/>
            <person name="Wu Z."/>
            <person name="Coulson A."/>
            <person name="Vaudin M."/>
            <person name="Sulston J.E."/>
            <person name="Durbin R.M."/>
            <person name="Hubbard T."/>
            <person name="Wooster R."/>
            <person name="Dunham I."/>
            <person name="Carter N.P."/>
            <person name="McVean G."/>
            <person name="Ross M.T."/>
            <person name="Harrow J."/>
            <person name="Olson M.V."/>
            <person name="Beck S."/>
            <person name="Rogers J."/>
            <person name="Bentley D.R."/>
        </authorList>
    </citation>
    <scope>NUCLEOTIDE SEQUENCE [LARGE SCALE GENOMIC DNA]</scope>
</reference>
<reference key="3">
    <citation type="journal article" date="2004" name="Genome Res.">
        <title>The status, quality, and expansion of the NIH full-length cDNA project: the Mammalian Gene Collection (MGC).</title>
        <authorList>
            <consortium name="The MGC Project Team"/>
        </authorList>
    </citation>
    <scope>NUCLEOTIDE SEQUENCE [LARGE SCALE MRNA]</scope>
    <source>
        <tissue>Brain</tissue>
    </source>
</reference>
<reference key="4">
    <citation type="journal article" date="2005" name="J. Cell Biol.">
        <title>The AAA+ protein torsinA interacts with a conserved domain present in LAP1 and a novel ER protein.</title>
        <authorList>
            <person name="Goodchild R.E."/>
            <person name="Dauer W.T."/>
        </authorList>
    </citation>
    <scope>INTERACTION WITH TORSIN-A</scope>
    <scope>SUBCELLULAR LOCATION</scope>
</reference>
<reference key="5">
    <citation type="journal article" date="2008" name="Mol. Cell">
        <title>Kinase-selective enrichment enables quantitative phosphoproteomics of the kinome across the cell cycle.</title>
        <authorList>
            <person name="Daub H."/>
            <person name="Olsen J.V."/>
            <person name="Bairlein M."/>
            <person name="Gnad F."/>
            <person name="Oppermann F.S."/>
            <person name="Korner R."/>
            <person name="Greff Z."/>
            <person name="Keri G."/>
            <person name="Stemmann O."/>
            <person name="Mann M."/>
        </authorList>
    </citation>
    <scope>IDENTIFICATION BY MASS SPECTROMETRY [LARGE SCALE ANALYSIS]</scope>
    <source>
        <tissue>Cervix carcinoma</tissue>
    </source>
</reference>
<reference key="6">
    <citation type="journal article" date="2008" name="Proc. Natl. Acad. Sci. U.S.A.">
        <title>A quantitative atlas of mitotic phosphorylation.</title>
        <authorList>
            <person name="Dephoure N."/>
            <person name="Zhou C."/>
            <person name="Villen J."/>
            <person name="Beausoleil S.A."/>
            <person name="Bakalarski C.E."/>
            <person name="Elledge S.J."/>
            <person name="Gygi S.P."/>
        </authorList>
    </citation>
    <scope>PHOSPHORYLATION [LARGE SCALE ANALYSIS] AT SER-120 AND SER-163</scope>
    <scope>IDENTIFICATION BY MASS SPECTROMETRY [LARGE SCALE ANALYSIS]</scope>
    <source>
        <tissue>Cervix carcinoma</tissue>
    </source>
</reference>
<reference key="7">
    <citation type="journal article" date="2009" name="Anal. Chem.">
        <title>Lys-N and trypsin cover complementary parts of the phosphoproteome in a refined SCX-based approach.</title>
        <authorList>
            <person name="Gauci S."/>
            <person name="Helbig A.O."/>
            <person name="Slijper M."/>
            <person name="Krijgsveld J."/>
            <person name="Heck A.J."/>
            <person name="Mohammed S."/>
        </authorList>
    </citation>
    <scope>ACETYLATION [LARGE SCALE ANALYSIS] AT ALA-2</scope>
    <scope>CLEAVAGE OF INITIATOR METHIONINE [LARGE SCALE ANALYSIS]</scope>
    <scope>IDENTIFICATION BY MASS SPECTROMETRY [LARGE SCALE ANALYSIS]</scope>
</reference>
<reference key="8">
    <citation type="journal article" date="2009" name="Mol. Biol. Cell">
        <title>LULL1 retargets TorsinA to the nuclear envelope revealing an activity that is impaired by the DYT1 dystonia mutation.</title>
        <authorList>
            <person name="Vander Heyden A.B."/>
            <person name="Naismith T.V."/>
            <person name="Snapp E.L."/>
            <person name="Hodzic D."/>
            <person name="Hanson P.I."/>
        </authorList>
    </citation>
    <scope>FUNCTION</scope>
    <scope>SUBCELLULAR LOCATION</scope>
</reference>
<reference key="9">
    <citation type="journal article" date="2010" name="Sci. Signal.">
        <title>Quantitative phosphoproteomics reveals widespread full phosphorylation site occupancy during mitosis.</title>
        <authorList>
            <person name="Olsen J.V."/>
            <person name="Vermeulen M."/>
            <person name="Santamaria A."/>
            <person name="Kumar C."/>
            <person name="Miller M.L."/>
            <person name="Jensen L.J."/>
            <person name="Gnad F."/>
            <person name="Cox J."/>
            <person name="Jensen T.S."/>
            <person name="Nigg E.A."/>
            <person name="Brunak S."/>
            <person name="Mann M."/>
        </authorList>
    </citation>
    <scope>IDENTIFICATION BY MASS SPECTROMETRY [LARGE SCALE ANALYSIS]</scope>
    <source>
        <tissue>Cervix carcinoma</tissue>
    </source>
</reference>
<reference key="10">
    <citation type="journal article" date="2011" name="Sci. Signal.">
        <title>System-wide temporal characterization of the proteome and phosphoproteome of human embryonic stem cell differentiation.</title>
        <authorList>
            <person name="Rigbolt K.T."/>
            <person name="Prokhorova T.A."/>
            <person name="Akimov V."/>
            <person name="Henningsen J."/>
            <person name="Johansen P.T."/>
            <person name="Kratchmarova I."/>
            <person name="Kassem M."/>
            <person name="Mann M."/>
            <person name="Olsen J.V."/>
            <person name="Blagoev B."/>
        </authorList>
    </citation>
    <scope>ACETYLATION [LARGE SCALE ANALYSIS] AT ALA-2</scope>
    <scope>PHOSPHORYLATION [LARGE SCALE ANALYSIS] AT SER-13</scope>
    <scope>CLEAVAGE OF INITIATOR METHIONINE [LARGE SCALE ANALYSIS]</scope>
    <scope>IDENTIFICATION BY MASS SPECTROMETRY [LARGE SCALE ANALYSIS]</scope>
</reference>
<reference key="11">
    <citation type="journal article" date="2013" name="J. Proteome Res.">
        <title>Toward a comprehensive characterization of a human cancer cell phosphoproteome.</title>
        <authorList>
            <person name="Zhou H."/>
            <person name="Di Palma S."/>
            <person name="Preisinger C."/>
            <person name="Peng M."/>
            <person name="Polat A.N."/>
            <person name="Heck A.J."/>
            <person name="Mohammed S."/>
        </authorList>
    </citation>
    <scope>PHOSPHORYLATION [LARGE SCALE ANALYSIS] AT SER-93; SER-120 AND THR-193</scope>
    <scope>IDENTIFICATION BY MASS SPECTROMETRY [LARGE SCALE ANALYSIS]</scope>
    <source>
        <tissue>Cervix carcinoma</tissue>
        <tissue>Erythroleukemia</tissue>
    </source>
</reference>
<reference key="12">
    <citation type="journal article" date="2013" name="Proc. Natl. Acad. Sci. U.S.A.">
        <title>Regulation of Torsin ATPases by LAP1 and LULL1.</title>
        <authorList>
            <person name="Zhao C."/>
            <person name="Brown R.S."/>
            <person name="Chase A.R."/>
            <person name="Eisele M.R."/>
            <person name="Schlieker C."/>
        </authorList>
    </citation>
    <scope>FUNCTION AS ATPASE ACTIVATOR</scope>
    <scope>INTERACTION WITH TOR1A</scope>
</reference>
<reference key="13">
    <citation type="journal article" date="2014" name="J. Biol. Chem.">
        <title>Arresting a Torsin ATPase reshapes the endoplasmic reticulum.</title>
        <authorList>
            <person name="Rose A.E."/>
            <person name="Zhao C."/>
            <person name="Turner E.M."/>
            <person name="Steyer A.M."/>
            <person name="Schlieker C."/>
        </authorList>
    </citation>
    <scope>FUNCTION IN ENDOPLASMIC RETICULUM INTEGRITY</scope>
    <scope>INTERACTION WITH TOR1B</scope>
    <scope>SUBCELLULAR LOCATION</scope>
</reference>
<reference key="14">
    <citation type="journal article" date="2014" name="J. Proteomics">
        <title>An enzyme assisted RP-RPLC approach for in-depth analysis of human liver phosphoproteome.</title>
        <authorList>
            <person name="Bian Y."/>
            <person name="Song C."/>
            <person name="Cheng K."/>
            <person name="Dong M."/>
            <person name="Wang F."/>
            <person name="Huang J."/>
            <person name="Sun D."/>
            <person name="Wang L."/>
            <person name="Ye M."/>
            <person name="Zou H."/>
        </authorList>
    </citation>
    <scope>PHOSPHORYLATION [LARGE SCALE ANALYSIS] AT THR-176</scope>
    <scope>IDENTIFICATION BY MASS SPECTROMETRY [LARGE SCALE ANALYSIS]</scope>
    <source>
        <tissue>Liver</tissue>
    </source>
</reference>
<reference key="15">
    <citation type="journal article" date="2016" name="Elife">
        <title>Structures of TorsinA and its disease-mutant complexed with an activator reveal the molecular basis for primary dystonia.</title>
        <authorList>
            <person name="Demircioglu F.E."/>
            <person name="Sosa B.A."/>
            <person name="Ingram J."/>
            <person name="Ploegh H.L."/>
            <person name="Schwartz T.U."/>
        </authorList>
    </citation>
    <scope>X-RAY CRYSTALLOGRAPHY (1.40 ANGSTROMS) OF 233-470 IN COMPLEX WITH TOR1A</scope>
</reference>
<dbReference type="EMBL" id="AF464140">
    <property type="protein sequence ID" value="AAM50514.1"/>
    <property type="molecule type" value="mRNA"/>
</dbReference>
<dbReference type="EMBL" id="AL359853">
    <property type="status" value="NOT_ANNOTATED_CDS"/>
    <property type="molecule type" value="Genomic_DNA"/>
</dbReference>
<dbReference type="EMBL" id="BC101532">
    <property type="protein sequence ID" value="AAI01533.1"/>
    <property type="molecule type" value="mRNA"/>
</dbReference>
<dbReference type="EMBL" id="BC112225">
    <property type="protein sequence ID" value="AAI12226.1"/>
    <property type="molecule type" value="mRNA"/>
</dbReference>
<dbReference type="CCDS" id="CCDS1334.1">
    <molecule id="Q8NFQ8-1"/>
</dbReference>
<dbReference type="RefSeq" id="NP_001186189.1">
    <molecule id="Q8NFQ8-1"/>
    <property type="nucleotide sequence ID" value="NM_001199260.2"/>
</dbReference>
<dbReference type="RefSeq" id="NP_001336863.1">
    <molecule id="Q8NFQ8-1"/>
    <property type="nucleotide sequence ID" value="NM_001349934.2"/>
</dbReference>
<dbReference type="RefSeq" id="NP_001336864.1">
    <molecule id="Q8NFQ8-1"/>
    <property type="nucleotide sequence ID" value="NM_001349935.2"/>
</dbReference>
<dbReference type="RefSeq" id="NP_001336865.1">
    <molecule id="Q8NFQ8-1"/>
    <property type="nucleotide sequence ID" value="NM_001349936.2"/>
</dbReference>
<dbReference type="RefSeq" id="NP_001336866.1">
    <molecule id="Q8NFQ8-1"/>
    <property type="nucleotide sequence ID" value="NM_001349937.2"/>
</dbReference>
<dbReference type="RefSeq" id="NP_659471.1">
    <molecule id="Q8NFQ8-1"/>
    <property type="nucleotide sequence ID" value="NM_145034.5"/>
</dbReference>
<dbReference type="RefSeq" id="XP_005244996.1">
    <property type="nucleotide sequence ID" value="XM_005244939.4"/>
</dbReference>
<dbReference type="RefSeq" id="XP_016855963.1">
    <property type="nucleotide sequence ID" value="XM_017000474.1"/>
</dbReference>
<dbReference type="RefSeq" id="XP_016855964.1">
    <property type="nucleotide sequence ID" value="XM_017000475.1"/>
</dbReference>
<dbReference type="RefSeq" id="XP_047303734.1">
    <molecule id="Q8NFQ8-1"/>
    <property type="nucleotide sequence ID" value="XM_047447778.1"/>
</dbReference>
<dbReference type="RefSeq" id="XP_047303738.1">
    <molecule id="Q8NFQ8-1"/>
    <property type="nucleotide sequence ID" value="XM_047447782.1"/>
</dbReference>
<dbReference type="RefSeq" id="XP_054190708.1">
    <molecule id="Q8NFQ8-1"/>
    <property type="nucleotide sequence ID" value="XM_054334733.1"/>
</dbReference>
<dbReference type="RefSeq" id="XP_054190709.1">
    <molecule id="Q8NFQ8-1"/>
    <property type="nucleotide sequence ID" value="XM_054334734.1"/>
</dbReference>
<dbReference type="PDB" id="5J1S">
    <property type="method" value="X-ray"/>
    <property type="resolution" value="1.40 A"/>
    <property type="chains" value="B=233-470"/>
</dbReference>
<dbReference type="PDB" id="5J1T">
    <property type="method" value="X-ray"/>
    <property type="resolution" value="1.40 A"/>
    <property type="chains" value="B=233-470"/>
</dbReference>
<dbReference type="PDBsum" id="5J1S"/>
<dbReference type="PDBsum" id="5J1T"/>
<dbReference type="SMR" id="Q8NFQ8"/>
<dbReference type="BioGRID" id="127870">
    <property type="interactions" value="269"/>
</dbReference>
<dbReference type="FunCoup" id="Q8NFQ8">
    <property type="interactions" value="1208"/>
</dbReference>
<dbReference type="IntAct" id="Q8NFQ8">
    <property type="interactions" value="86"/>
</dbReference>
<dbReference type="MINT" id="Q8NFQ8"/>
<dbReference type="STRING" id="9606.ENSP00000356584"/>
<dbReference type="GlyConnect" id="1823">
    <property type="glycosylation" value="2 N-Linked glycans (1 site)"/>
</dbReference>
<dbReference type="GlyCosmos" id="Q8NFQ8">
    <property type="glycosylation" value="1 site, 2 glycans"/>
</dbReference>
<dbReference type="GlyGen" id="Q8NFQ8">
    <property type="glycosylation" value="6 sites, 10 N-linked glycans (1 site), 1 O-linked glycan (3 sites)"/>
</dbReference>
<dbReference type="iPTMnet" id="Q8NFQ8"/>
<dbReference type="MetOSite" id="Q8NFQ8"/>
<dbReference type="PhosphoSitePlus" id="Q8NFQ8"/>
<dbReference type="SwissPalm" id="Q8NFQ8"/>
<dbReference type="BioMuta" id="TOR1AIP2"/>
<dbReference type="DMDM" id="74751288"/>
<dbReference type="jPOST" id="Q8NFQ8"/>
<dbReference type="MassIVE" id="Q8NFQ8"/>
<dbReference type="PaxDb" id="9606-ENSP00000356584"/>
<dbReference type="PeptideAtlas" id="Q8NFQ8"/>
<dbReference type="ProteomicsDB" id="73337">
    <molecule id="Q8NFQ8-1"/>
</dbReference>
<dbReference type="Pumba" id="Q8NFQ8"/>
<dbReference type="ABCD" id="Q8NFQ8">
    <property type="antibodies" value="1 sequenced antibody"/>
</dbReference>
<dbReference type="Antibodypedia" id="60527">
    <property type="antibodies" value="70 antibodies from 16 providers"/>
</dbReference>
<dbReference type="DNASU" id="163590"/>
<dbReference type="Ensembl" id="ENST00000367612.7">
    <molecule id="Q8NFQ8-1"/>
    <property type="protein sequence ID" value="ENSP00000356584.3"/>
    <property type="gene ID" value="ENSG00000169905.13"/>
</dbReference>
<dbReference type="Ensembl" id="ENST00000609928.6">
    <molecule id="Q8NFQ8-1"/>
    <property type="protein sequence ID" value="ENSP00000477486.1"/>
    <property type="gene ID" value="ENSG00000169905.13"/>
</dbReference>
<dbReference type="GeneID" id="163590"/>
<dbReference type="KEGG" id="hsa:163590"/>
<dbReference type="MANE-Select" id="ENST00000609928.6">
    <property type="protein sequence ID" value="ENSP00000477486.1"/>
    <property type="RefSeq nucleotide sequence ID" value="NM_001199260.2"/>
    <property type="RefSeq protein sequence ID" value="NP_001186189.1"/>
</dbReference>
<dbReference type="UCSC" id="uc001gnk.4">
    <molecule id="Q8NFQ8-1"/>
    <property type="organism name" value="human"/>
</dbReference>
<dbReference type="AGR" id="HGNC:24055"/>
<dbReference type="CTD" id="163590"/>
<dbReference type="DisGeNET" id="163590"/>
<dbReference type="GeneCards" id="TOR1AIP2"/>
<dbReference type="HGNC" id="HGNC:24055">
    <property type="gene designation" value="TOR1AIP2"/>
</dbReference>
<dbReference type="HPA" id="ENSG00000169905">
    <property type="expression patterns" value="Low tissue specificity"/>
</dbReference>
<dbReference type="MalaCards" id="TOR1AIP2"/>
<dbReference type="MIM" id="614513">
    <property type="type" value="gene"/>
</dbReference>
<dbReference type="neXtProt" id="NX_Q8NFQ8"/>
<dbReference type="OpenTargets" id="ENSG00000169905"/>
<dbReference type="PharmGKB" id="PA142670716"/>
<dbReference type="VEuPathDB" id="HostDB:ENSG00000169905"/>
<dbReference type="eggNOG" id="ENOG502QUV7">
    <property type="taxonomic scope" value="Eukaryota"/>
</dbReference>
<dbReference type="GeneTree" id="ENSGT00390000012166"/>
<dbReference type="HOGENOM" id="CLU_034263_1_1_1"/>
<dbReference type="InParanoid" id="Q8NFQ8"/>
<dbReference type="OMA" id="AFLAHFS"/>
<dbReference type="OrthoDB" id="6258998at2759"/>
<dbReference type="PAN-GO" id="Q8NFQ8">
    <property type="GO annotations" value="4 GO annotations based on evolutionary models"/>
</dbReference>
<dbReference type="PhylomeDB" id="Q8NFQ8"/>
<dbReference type="TreeFam" id="TF329438"/>
<dbReference type="PathwayCommons" id="Q8NFQ8"/>
<dbReference type="SignaLink" id="Q8NFQ8"/>
<dbReference type="BioGRID-ORCS" id="163590">
    <property type="hits" value="74 hits in 1162 CRISPR screens"/>
</dbReference>
<dbReference type="ChiTaRS" id="TOR1AIP2">
    <property type="organism name" value="human"/>
</dbReference>
<dbReference type="GenomeRNAi" id="163590"/>
<dbReference type="Pharos" id="Q8NFQ8">
    <property type="development level" value="Tbio"/>
</dbReference>
<dbReference type="Proteomes" id="UP000005640">
    <property type="component" value="Chromosome 1"/>
</dbReference>
<dbReference type="RNAct" id="Q8NFQ8">
    <property type="molecule type" value="protein"/>
</dbReference>
<dbReference type="Bgee" id="ENSG00000169905">
    <property type="expression patterns" value="Expressed in adrenal tissue and 207 other cell types or tissues"/>
</dbReference>
<dbReference type="ExpressionAtlas" id="Q8NFQ8">
    <property type="expression patterns" value="baseline and differential"/>
</dbReference>
<dbReference type="GO" id="GO:0005783">
    <property type="term" value="C:endoplasmic reticulum"/>
    <property type="evidence" value="ECO:0000314"/>
    <property type="project" value="HPA"/>
</dbReference>
<dbReference type="GO" id="GO:0005789">
    <property type="term" value="C:endoplasmic reticulum membrane"/>
    <property type="evidence" value="ECO:0007669"/>
    <property type="project" value="UniProtKB-SubCell"/>
</dbReference>
<dbReference type="GO" id="GO:0016020">
    <property type="term" value="C:membrane"/>
    <property type="evidence" value="ECO:0000318"/>
    <property type="project" value="GO_Central"/>
</dbReference>
<dbReference type="GO" id="GO:0031965">
    <property type="term" value="C:nuclear membrane"/>
    <property type="evidence" value="ECO:0007669"/>
    <property type="project" value="UniProtKB-SubCell"/>
</dbReference>
<dbReference type="GO" id="GO:0001671">
    <property type="term" value="F:ATPase activator activity"/>
    <property type="evidence" value="ECO:0000314"/>
    <property type="project" value="UniProtKB"/>
</dbReference>
<dbReference type="GO" id="GO:0051117">
    <property type="term" value="F:ATPase binding"/>
    <property type="evidence" value="ECO:0000353"/>
    <property type="project" value="UniProtKB"/>
</dbReference>
<dbReference type="GO" id="GO:0007029">
    <property type="term" value="P:endoplasmic reticulum organization"/>
    <property type="evidence" value="ECO:0000315"/>
    <property type="project" value="UniProtKB"/>
</dbReference>
<dbReference type="GO" id="GO:0061024">
    <property type="term" value="P:membrane organization"/>
    <property type="evidence" value="ECO:0000318"/>
    <property type="project" value="GO_Central"/>
</dbReference>
<dbReference type="GO" id="GO:0032781">
    <property type="term" value="P:positive regulation of ATP-dependent activity"/>
    <property type="evidence" value="ECO:0000314"/>
    <property type="project" value="UniProtKB"/>
</dbReference>
<dbReference type="GO" id="GO:0090435">
    <property type="term" value="P:protein localization to nuclear envelope"/>
    <property type="evidence" value="ECO:0000314"/>
    <property type="project" value="CACAO"/>
</dbReference>
<dbReference type="FunFam" id="3.40.50.12190:FF:000001">
    <property type="entry name" value="torsin-1A-interacting protein 1 isoform X1"/>
    <property type="match status" value="1"/>
</dbReference>
<dbReference type="Gene3D" id="3.40.50.12190">
    <property type="match status" value="1"/>
</dbReference>
<dbReference type="InterPro" id="IPR038599">
    <property type="entry name" value="LAP1C-like_C_sf"/>
</dbReference>
<dbReference type="InterPro" id="IPR008662">
    <property type="entry name" value="TOIP1/2"/>
</dbReference>
<dbReference type="InterPro" id="IPR046753">
    <property type="entry name" value="TOIP1/2_C"/>
</dbReference>
<dbReference type="InterPro" id="IPR046754">
    <property type="entry name" value="TOIP1/2_N"/>
</dbReference>
<dbReference type="PANTHER" id="PTHR18843">
    <property type="entry name" value="TORSIN-1A-INTERACTING PROTEIN"/>
    <property type="match status" value="1"/>
</dbReference>
<dbReference type="PANTHER" id="PTHR18843:SF2">
    <property type="entry name" value="TORSIN-1A-INTERACTING PROTEIN 2"/>
    <property type="match status" value="1"/>
</dbReference>
<dbReference type="Pfam" id="PF05609">
    <property type="entry name" value="LAP1_C"/>
    <property type="match status" value="1"/>
</dbReference>
<dbReference type="Pfam" id="PF20443">
    <property type="entry name" value="LAP1_N"/>
    <property type="match status" value="1"/>
</dbReference>
<proteinExistence type="evidence at protein level"/>
<keyword id="KW-0002">3D-structure</keyword>
<keyword id="KW-0007">Acetylation</keyword>
<keyword id="KW-0025">Alternative splicing</keyword>
<keyword id="KW-0256">Endoplasmic reticulum</keyword>
<keyword id="KW-0325">Glycoprotein</keyword>
<keyword id="KW-0472">Membrane</keyword>
<keyword id="KW-0539">Nucleus</keyword>
<keyword id="KW-0597">Phosphoprotein</keyword>
<keyword id="KW-1267">Proteomics identification</keyword>
<keyword id="KW-1185">Reference proteome</keyword>
<keyword id="KW-0812">Transmembrane</keyword>
<keyword id="KW-1133">Transmembrane helix</keyword>
<evidence type="ECO:0000255" key="1"/>
<evidence type="ECO:0000256" key="2">
    <source>
        <dbReference type="SAM" id="MobiDB-lite"/>
    </source>
</evidence>
<evidence type="ECO:0000269" key="3">
    <source>
    </source>
</evidence>
<evidence type="ECO:0000269" key="4">
    <source>
    </source>
</evidence>
<evidence type="ECO:0000269" key="5">
    <source>
    </source>
</evidence>
<evidence type="ECO:0000269" key="6">
    <source>
    </source>
</evidence>
<evidence type="ECO:0000269" key="7">
    <source>
    </source>
</evidence>
<evidence type="ECO:0000305" key="8"/>
<evidence type="ECO:0007744" key="9">
    <source>
    </source>
</evidence>
<evidence type="ECO:0007744" key="10">
    <source>
    </source>
</evidence>
<evidence type="ECO:0007744" key="11">
    <source>
    </source>
</evidence>
<evidence type="ECO:0007744" key="12">
    <source>
    </source>
</evidence>
<evidence type="ECO:0007744" key="13">
    <source>
    </source>
</evidence>
<evidence type="ECO:0007829" key="14">
    <source>
        <dbReference type="PDB" id="5J1S"/>
    </source>
</evidence>
<evidence type="ECO:0007829" key="15">
    <source>
        <dbReference type="PDB" id="5J1T"/>
    </source>
</evidence>
<accession>Q8NFQ8</accession>
<sequence length="470" mass="51263">MADSGLREPQEDSQKDLENDPSVNSQAQETTIIASNAEEAEILHSACGLSKDHQEVETEGPESADTGDKSESPDEANVGKHPKDKTEDENKQSFLDGGKGHHLPSENLGKEPLDPDPSHSPSDKVGRADAHLGSSSVALPKEASDGTGASQEPPTTDSQEAQSPGHSSAGQEGEDTLRRRLLAPEAGSHPQQTQKLEEIKENAQDTMRQINKKGFWSYGPVILVVLVVAVVASSVNSYYSSPAQQVPKNPALEAFLAQFSQLEDKFPGQSSFLWQRGRKFLQKHLNASNPTEPATIIFTAAREGRETLKCLSHHVADAYTSSQKVSPIQIDGAGRTWQDSDTVKLLVDLELSYGFENGQKAAVVHHFESFPAGSTLIFYKYCDHENAAFKDVALVLTVLLEEETLEASVGPRETEEKVRDLLWAKFTNSDTPTSFNHMDSDKLSGLWSRISHLVLPVQPVSSIEEQGCLF</sequence>
<protein>
    <recommendedName>
        <fullName>Torsin-1A-interacting protein 2</fullName>
    </recommendedName>
    <alternativeName>
        <fullName>Lumenal domain-like LAP1</fullName>
    </alternativeName>
</protein>
<feature type="initiator methionine" description="Removed" evidence="10 11">
    <location>
        <position position="1"/>
    </location>
</feature>
<feature type="chain" id="PRO_0000228838" description="Torsin-1A-interacting protein 2">
    <location>
        <begin position="2"/>
        <end position="470"/>
    </location>
</feature>
<feature type="topological domain" description="Cytoplasmic" evidence="1">
    <location>
        <begin position="2"/>
        <end position="214"/>
    </location>
</feature>
<feature type="transmembrane region" description="Helical" evidence="1">
    <location>
        <begin position="215"/>
        <end position="235"/>
    </location>
</feature>
<feature type="topological domain" description="Lumenal" evidence="1">
    <location>
        <begin position="236"/>
        <end position="470"/>
    </location>
</feature>
<feature type="region of interest" description="Disordered" evidence="2">
    <location>
        <begin position="1"/>
        <end position="174"/>
    </location>
</feature>
<feature type="region of interest" description="Interaction with TOR1A" evidence="5">
    <location>
        <begin position="236"/>
        <end position="470"/>
    </location>
</feature>
<feature type="compositionally biased region" description="Basic and acidic residues" evidence="2">
    <location>
        <begin position="1"/>
        <end position="18"/>
    </location>
</feature>
<feature type="compositionally biased region" description="Polar residues" evidence="2">
    <location>
        <begin position="21"/>
        <end position="34"/>
    </location>
</feature>
<feature type="compositionally biased region" description="Basic and acidic residues" evidence="2">
    <location>
        <begin position="108"/>
        <end position="130"/>
    </location>
</feature>
<feature type="compositionally biased region" description="Polar residues" evidence="2">
    <location>
        <begin position="147"/>
        <end position="170"/>
    </location>
</feature>
<feature type="modified residue" description="N-acetylalanine" evidence="10 11">
    <location>
        <position position="2"/>
    </location>
</feature>
<feature type="modified residue" description="Phosphoserine" evidence="11">
    <location>
        <position position="13"/>
    </location>
</feature>
<feature type="modified residue" description="Phosphoserine" evidence="12">
    <location>
        <position position="93"/>
    </location>
</feature>
<feature type="modified residue" description="Phosphoserine" evidence="9 12">
    <location>
        <position position="120"/>
    </location>
</feature>
<feature type="modified residue" description="Phosphoserine" evidence="9">
    <location>
        <position position="163"/>
    </location>
</feature>
<feature type="modified residue" description="Phosphothreonine" evidence="13">
    <location>
        <position position="176"/>
    </location>
</feature>
<feature type="modified residue" description="Phosphothreonine" evidence="12">
    <location>
        <position position="193"/>
    </location>
</feature>
<feature type="glycosylation site" description="N-linked (GlcNAc...) asparagine" evidence="1">
    <location>
        <position position="286"/>
    </location>
</feature>
<feature type="helix" evidence="14">
    <location>
        <begin position="242"/>
        <end position="244"/>
    </location>
</feature>
<feature type="helix" evidence="14">
    <location>
        <begin position="250"/>
        <end position="265"/>
    </location>
</feature>
<feature type="helix" evidence="14">
    <location>
        <begin position="271"/>
        <end position="285"/>
    </location>
</feature>
<feature type="strand" evidence="14">
    <location>
        <begin position="294"/>
        <end position="300"/>
    </location>
</feature>
<feature type="helix" evidence="14">
    <location>
        <begin position="302"/>
        <end position="304"/>
    </location>
</feature>
<feature type="helix" evidence="14">
    <location>
        <begin position="305"/>
        <end position="319"/>
    </location>
</feature>
<feature type="turn" evidence="14">
    <location>
        <begin position="320"/>
        <end position="322"/>
    </location>
</feature>
<feature type="strand" evidence="14">
    <location>
        <begin position="328"/>
        <end position="331"/>
    </location>
</feature>
<feature type="helix" evidence="14">
    <location>
        <begin position="340"/>
        <end position="356"/>
    </location>
</feature>
<feature type="strand" evidence="14">
    <location>
        <begin position="361"/>
        <end position="365"/>
    </location>
</feature>
<feature type="helix" evidence="14">
    <location>
        <begin position="367"/>
        <end position="369"/>
    </location>
</feature>
<feature type="helix" evidence="14">
    <location>
        <begin position="372"/>
        <end position="376"/>
    </location>
</feature>
<feature type="helix" evidence="14">
    <location>
        <begin position="377"/>
        <end position="382"/>
    </location>
</feature>
<feature type="turn" evidence="14">
    <location>
        <begin position="384"/>
        <end position="386"/>
    </location>
</feature>
<feature type="strand" evidence="14">
    <location>
        <begin position="393"/>
        <end position="399"/>
    </location>
</feature>
<feature type="strand" evidence="14">
    <location>
        <begin position="401"/>
        <end position="403"/>
    </location>
</feature>
<feature type="helix" evidence="14">
    <location>
        <begin position="411"/>
        <end position="426"/>
    </location>
</feature>
<feature type="strand" evidence="15">
    <location>
        <begin position="428"/>
        <end position="431"/>
    </location>
</feature>
<feature type="helix" evidence="14">
    <location>
        <begin position="440"/>
        <end position="450"/>
    </location>
</feature>
<feature type="strand" evidence="14">
    <location>
        <begin position="454"/>
        <end position="456"/>
    </location>
</feature>
<feature type="helix" evidence="14">
    <location>
        <begin position="461"/>
        <end position="466"/>
    </location>
</feature>
<gene>
    <name type="primary">TOR1AIP2</name>
    <name type="synonym">IFRG15</name>
    <name type="synonym">LULL1</name>
</gene>
<comment type="function">
    <text evidence="4 5 6">Required for endoplasmic reticulum integrity. Regulates the distribution of TOR1A between the endoplasmic reticulum and the nuclear envelope as well as induces TOR1A, TOR1B and TOR3A ATPase activity.</text>
</comment>
<comment type="subunit">
    <text evidence="3 5 6 7">Interacts with TOR1A and TOR1B (ATP-bound).</text>
</comment>
<comment type="interaction">
    <interactant intactId="EBI-524567">
        <id>Q8NFQ8</id>
    </interactant>
    <interactant intactId="EBI-524257">
        <id>O14656</id>
        <label>TOR1A</label>
    </interactant>
    <organismsDiffer>false</organismsDiffer>
    <experiments>4</experiments>
</comment>
<comment type="subcellular location">
    <subcellularLocation>
        <location>Endoplasmic reticulum membrane</location>
        <topology>Single-pass membrane protein</topology>
    </subcellularLocation>
    <subcellularLocation>
        <location>Nucleus membrane</location>
    </subcellularLocation>
</comment>
<comment type="alternative products">
    <event type="alternative splicing"/>
    <isoform>
        <id>Q8NFQ8-1</id>
        <name>TOR1AIP2</name>
        <sequence type="displayed"/>
    </isoform>
    <isoform>
        <id>Q9H496-1</id>
        <name>IFRG15</name>
        <sequence type="external"/>
    </isoform>
</comment>
<comment type="similarity">
    <text evidence="8">Belongs to the TOR1AIP family.</text>
</comment>
<name>TOIP2_HUMAN</name>